<proteinExistence type="evidence at protein level"/>
<organismHost>
    <name type="scientific">Spiroplasma melliferum</name>
    <dbReference type="NCBI Taxonomy" id="2134"/>
</organismHost>
<accession>P11340</accession>
<protein>
    <recommendedName>
        <fullName>DNA binding protein ORF8</fullName>
    </recommendedName>
</protein>
<dbReference type="EMBL" id="M17988">
    <property type="status" value="NOT_ANNOTATED_CDS"/>
    <property type="molecule type" value="Genomic_DNA"/>
</dbReference>
<dbReference type="PIR" id="A29825">
    <property type="entry name" value="G8BPSV"/>
</dbReference>
<dbReference type="PDB" id="9CGM">
    <property type="method" value="EM"/>
    <property type="resolution" value="2.52 A"/>
    <property type="chains" value="0/12/22/32/42/52/62/72/82/9/C2/D2/E2/F2/G2/H2/I2/J2/K2/L2/M2/N2/O2/P2/Q2/R2/S2/T2/U2/V2=1-38"/>
</dbReference>
<dbReference type="PDBsum" id="9CGM"/>
<dbReference type="EMDB" id="EMD-45583"/>
<dbReference type="SMR" id="P11340"/>
<dbReference type="Proteomes" id="UP000002101">
    <property type="component" value="Genome"/>
</dbReference>
<dbReference type="GO" id="GO:0030430">
    <property type="term" value="C:host cell cytoplasm"/>
    <property type="evidence" value="ECO:0007669"/>
    <property type="project" value="UniProtKB-SubCell"/>
</dbReference>
<dbReference type="GO" id="GO:0019028">
    <property type="term" value="C:viral capsid"/>
    <property type="evidence" value="ECO:0007669"/>
    <property type="project" value="UniProtKB-KW"/>
</dbReference>
<dbReference type="GO" id="GO:0003677">
    <property type="term" value="F:DNA binding"/>
    <property type="evidence" value="ECO:0007669"/>
    <property type="project" value="UniProtKB-KW"/>
</dbReference>
<keyword id="KW-0002">3D-structure</keyword>
<keyword id="KW-0167">Capsid protein</keyword>
<keyword id="KW-0238">DNA-binding</keyword>
<keyword id="KW-1035">Host cytoplasm</keyword>
<keyword id="KW-1185">Reference proteome</keyword>
<keyword id="KW-0946">Virion</keyword>
<organism>
    <name type="scientific">Spiroplasma virus 4</name>
    <name type="common">SpV4</name>
    <dbReference type="NCBI Taxonomy" id="2928746"/>
    <lineage>
        <taxon>Viruses</taxon>
        <taxon>Monodnaviria</taxon>
        <taxon>Sangervirae</taxon>
        <taxon>Phixviricota</taxon>
        <taxon>Malgrandaviricetes</taxon>
        <taxon>Petitvirales</taxon>
        <taxon>Microviridae</taxon>
        <taxon>Gokushovirinae</taxon>
        <taxon>Spiromicrovirus</taxon>
        <taxon>Spiromicrovirus SpV4</taxon>
    </lineage>
</organism>
<feature type="chain" id="PRO_0000065804" description="DNA binding protein ORF8">
    <location>
        <begin position="1"/>
        <end position="38"/>
    </location>
</feature>
<gene>
    <name type="ORF">ORF8</name>
</gene>
<comment type="function">
    <text evidence="1">Mediates ssDNA packaging into virion, it locates to the internal surface of the capsid, thereby displacing the internal scaffolding protein during virion formation. Additionally, protein ORF8 plays a role in viral attachment to the host cell (By similarity).</text>
</comment>
<comment type="subcellular location">
    <subcellularLocation>
        <location>Virion</location>
    </subcellularLocation>
    <subcellularLocation>
        <location evidence="1">Host cytoplasm</location>
    </subcellularLocation>
</comment>
<comment type="similarity">
    <text evidence="2">Belongs to the microviridae J protein family.</text>
</comment>
<reference key="1">
    <citation type="journal article" date="1987" name="J. Bacteriol.">
        <title>Spiroplasma virus 4: nucleotide sequence of the viral DNA, regulatory signals, and proposed genome organization.</title>
        <authorList>
            <person name="Renaudin J."/>
            <person name="Pascarel M.-C."/>
            <person name="Bove J.-M."/>
        </authorList>
    </citation>
    <scope>NUCLEOTIDE SEQUENCE [GENOMIC DNA]</scope>
</reference>
<evidence type="ECO:0000250" key="1"/>
<evidence type="ECO:0000305" key="2"/>
<sequence>MRRKVKNTKRHQWRLTHSARSIKRANIMPSNPRGGRRF</sequence>
<name>J_SPV4</name>